<proteinExistence type="evidence at protein level"/>
<name>HSV2_KLULA</name>
<feature type="chain" id="PRO_0000051029" description="SVP1-like protein 2">
    <location>
        <begin position="1"/>
        <end position="339"/>
    </location>
</feature>
<feature type="repeat" description="WD 1">
    <location>
        <begin position="177"/>
        <end position="217"/>
    </location>
</feature>
<feature type="repeat" description="WD 2">
    <location>
        <begin position="222"/>
        <end position="261"/>
    </location>
</feature>
<feature type="strand" evidence="5">
    <location>
        <begin position="19"/>
        <end position="22"/>
    </location>
</feature>
<feature type="strand" evidence="5">
    <location>
        <begin position="26"/>
        <end position="32"/>
    </location>
</feature>
<feature type="strand" evidence="5">
    <location>
        <begin position="34"/>
        <end position="41"/>
    </location>
</feature>
<feature type="turn" evidence="5">
    <location>
        <begin position="42"/>
        <end position="45"/>
    </location>
</feature>
<feature type="strand" evidence="5">
    <location>
        <begin position="46"/>
        <end position="52"/>
    </location>
</feature>
<feature type="strand" evidence="5">
    <location>
        <begin position="56"/>
        <end position="61"/>
    </location>
</feature>
<feature type="strand" evidence="5">
    <location>
        <begin position="65"/>
        <end position="72"/>
    </location>
</feature>
<feature type="turn" evidence="5">
    <location>
        <begin position="73"/>
        <end position="76"/>
    </location>
</feature>
<feature type="strand" evidence="5">
    <location>
        <begin position="77"/>
        <end position="82"/>
    </location>
</feature>
<feature type="turn" evidence="5">
    <location>
        <begin position="83"/>
        <end position="86"/>
    </location>
</feature>
<feature type="strand" evidence="5">
    <location>
        <begin position="87"/>
        <end position="93"/>
    </location>
</feature>
<feature type="strand" evidence="5">
    <location>
        <begin position="98"/>
        <end position="103"/>
    </location>
</feature>
<feature type="strand" evidence="5">
    <location>
        <begin position="105"/>
        <end position="112"/>
    </location>
</feature>
<feature type="strand" evidence="5">
    <location>
        <begin position="115"/>
        <end position="122"/>
    </location>
</feature>
<feature type="strand" evidence="3">
    <location>
        <begin position="127"/>
        <end position="133"/>
    </location>
</feature>
<feature type="strand" evidence="5">
    <location>
        <begin position="138"/>
        <end position="141"/>
    </location>
</feature>
<feature type="strand" evidence="5">
    <location>
        <begin position="144"/>
        <end position="148"/>
    </location>
</feature>
<feature type="strand" evidence="3">
    <location>
        <begin position="150"/>
        <end position="152"/>
    </location>
</feature>
<feature type="strand" evidence="5">
    <location>
        <begin position="155"/>
        <end position="160"/>
    </location>
</feature>
<feature type="strand" evidence="4">
    <location>
        <begin position="163"/>
        <end position="165"/>
    </location>
</feature>
<feature type="strand" evidence="5">
    <location>
        <begin position="173"/>
        <end position="176"/>
    </location>
</feature>
<feature type="strand" evidence="5">
    <location>
        <begin position="182"/>
        <end position="187"/>
    </location>
</feature>
<feature type="strand" evidence="5">
    <location>
        <begin position="189"/>
        <end position="200"/>
    </location>
</feature>
<feature type="strand" evidence="5">
    <location>
        <begin position="202"/>
        <end position="208"/>
    </location>
</feature>
<feature type="turn" evidence="5">
    <location>
        <begin position="209"/>
        <end position="211"/>
    </location>
</feature>
<feature type="strand" evidence="5">
    <location>
        <begin position="214"/>
        <end position="219"/>
    </location>
</feature>
<feature type="strand" evidence="5">
    <location>
        <begin position="227"/>
        <end position="232"/>
    </location>
</feature>
<feature type="strand" evidence="5">
    <location>
        <begin position="236"/>
        <end position="243"/>
    </location>
</feature>
<feature type="turn" evidence="4">
    <location>
        <begin position="244"/>
        <end position="246"/>
    </location>
</feature>
<feature type="strand" evidence="5">
    <location>
        <begin position="247"/>
        <end position="252"/>
    </location>
</feature>
<feature type="helix" evidence="4">
    <location>
        <begin position="256"/>
        <end position="260"/>
    </location>
</feature>
<feature type="strand" evidence="5">
    <location>
        <begin position="279"/>
        <end position="283"/>
    </location>
</feature>
<feature type="strand" evidence="5">
    <location>
        <begin position="294"/>
        <end position="307"/>
    </location>
</feature>
<feature type="turn" evidence="5">
    <location>
        <begin position="308"/>
        <end position="311"/>
    </location>
</feature>
<feature type="strand" evidence="5">
    <location>
        <begin position="312"/>
        <end position="321"/>
    </location>
</feature>
<feature type="turn" evidence="5">
    <location>
        <begin position="322"/>
        <end position="325"/>
    </location>
</feature>
<feature type="strand" evidence="5">
    <location>
        <begin position="326"/>
        <end position="336"/>
    </location>
</feature>
<protein>
    <recommendedName>
        <fullName>SVP1-like protein 2</fullName>
    </recommendedName>
</protein>
<evidence type="ECO:0000250" key="1"/>
<evidence type="ECO:0000305" key="2"/>
<evidence type="ECO:0007829" key="3">
    <source>
        <dbReference type="PDB" id="4AV9"/>
    </source>
</evidence>
<evidence type="ECO:0007829" key="4">
    <source>
        <dbReference type="PDB" id="4EXV"/>
    </source>
</evidence>
<evidence type="ECO:0007829" key="5">
    <source>
        <dbReference type="PDB" id="4V16"/>
    </source>
</evidence>
<dbReference type="EMBL" id="CR382125">
    <property type="protein sequence ID" value="CAG99753.1"/>
    <property type="molecule type" value="Genomic_DNA"/>
</dbReference>
<dbReference type="RefSeq" id="XP_454666.1">
    <property type="nucleotide sequence ID" value="XM_454666.1"/>
</dbReference>
<dbReference type="PDB" id="4AV8">
    <property type="method" value="X-ray"/>
    <property type="resolution" value="3.35 A"/>
    <property type="chains" value="A=1-339"/>
</dbReference>
<dbReference type="PDB" id="4AV9">
    <property type="method" value="X-ray"/>
    <property type="resolution" value="3.00 A"/>
    <property type="chains" value="A=1-339"/>
</dbReference>
<dbReference type="PDB" id="4EXV">
    <property type="method" value="X-ray"/>
    <property type="resolution" value="3.00 A"/>
    <property type="chains" value="A=1-339"/>
</dbReference>
<dbReference type="PDB" id="4V16">
    <property type="method" value="X-ray"/>
    <property type="resolution" value="2.80 A"/>
    <property type="chains" value="A=1-256, A=275-339"/>
</dbReference>
<dbReference type="PDBsum" id="4AV8"/>
<dbReference type="PDBsum" id="4AV9"/>
<dbReference type="PDBsum" id="4EXV"/>
<dbReference type="PDBsum" id="4V16"/>
<dbReference type="SMR" id="Q6CN23"/>
<dbReference type="FunCoup" id="Q6CN23">
    <property type="interactions" value="405"/>
</dbReference>
<dbReference type="STRING" id="284590.Q6CN23"/>
<dbReference type="PaxDb" id="284590-Q6CN23"/>
<dbReference type="KEGG" id="kla:KLLA0_E15885g"/>
<dbReference type="eggNOG" id="KOG2111">
    <property type="taxonomic scope" value="Eukaryota"/>
</dbReference>
<dbReference type="HOGENOM" id="CLU_025895_0_1_1"/>
<dbReference type="InParanoid" id="Q6CN23"/>
<dbReference type="OMA" id="CEFANGL"/>
<dbReference type="EvolutionaryTrace" id="Q6CN23"/>
<dbReference type="Proteomes" id="UP000000598">
    <property type="component" value="Chromosome E"/>
</dbReference>
<dbReference type="GO" id="GO:0030659">
    <property type="term" value="C:cytoplasmic vesicle membrane"/>
    <property type="evidence" value="ECO:0007669"/>
    <property type="project" value="UniProtKB-SubCell"/>
</dbReference>
<dbReference type="GO" id="GO:0005774">
    <property type="term" value="C:vacuolar membrane"/>
    <property type="evidence" value="ECO:0007669"/>
    <property type="project" value="UniProtKB-SubCell"/>
</dbReference>
<dbReference type="GO" id="GO:0015031">
    <property type="term" value="P:protein transport"/>
    <property type="evidence" value="ECO:0007669"/>
    <property type="project" value="UniProtKB-KW"/>
</dbReference>
<dbReference type="Gene3D" id="2.130.10.10">
    <property type="entry name" value="YVTN repeat-like/Quinoprotein amine dehydrogenase"/>
    <property type="match status" value="1"/>
</dbReference>
<dbReference type="InterPro" id="IPR048720">
    <property type="entry name" value="PROPPIN"/>
</dbReference>
<dbReference type="InterPro" id="IPR015943">
    <property type="entry name" value="WD40/YVTN_repeat-like_dom_sf"/>
</dbReference>
<dbReference type="InterPro" id="IPR036322">
    <property type="entry name" value="WD40_repeat_dom_sf"/>
</dbReference>
<dbReference type="InterPro" id="IPR001680">
    <property type="entry name" value="WD40_rpt"/>
</dbReference>
<dbReference type="PANTHER" id="PTHR11227">
    <property type="entry name" value="WD-REPEAT PROTEIN INTERACTING WITH PHOSPHOINOSIDES WIPI -RELATED"/>
    <property type="match status" value="1"/>
</dbReference>
<dbReference type="Pfam" id="PF21032">
    <property type="entry name" value="PROPPIN"/>
    <property type="match status" value="1"/>
</dbReference>
<dbReference type="SMART" id="SM00320">
    <property type="entry name" value="WD40"/>
    <property type="match status" value="2"/>
</dbReference>
<dbReference type="SUPFAM" id="SSF50978">
    <property type="entry name" value="WD40 repeat-like"/>
    <property type="match status" value="1"/>
</dbReference>
<accession>Q6CN23</accession>
<comment type="function">
    <text evidence="1">Involved in mitochondrial or peroxisomal functions and amino acid signaling pathways.</text>
</comment>
<comment type="subcellular location">
    <subcellularLocation>
        <location evidence="1">Vacuole membrane</location>
        <topology evidence="1">Peripheral membrane protein</topology>
    </subcellularLocation>
    <subcellularLocation>
        <location evidence="1">Cytoplasmic vesicle membrane</location>
        <topology evidence="1">Peripheral membrane protein</topology>
    </subcellularLocation>
    <text evidence="1">Vesicular and vacuolar.</text>
</comment>
<comment type="domain">
    <text evidence="1">May contain a beta-propeller domain involved in specific binding to phosphatidylinositol 3,5-bisphosphate (PIP2), leading to the association of the protein to the membrane.</text>
</comment>
<comment type="similarity">
    <text evidence="2">Belongs to the WD repeat PROPPIN family.</text>
</comment>
<sequence length="339" mass="39167">MLTRNPIVPENHVSNPIVDYEFNQDQSCLIVSTPKSFDIYNVHPLKRIMSQEMPDAGTIRMLHRTNYIAFVSTKKELLHIWDDVKKQDITRVKLDAAVKDLFLSREFIVVSQGDVISIFKFGNPWNKITEDIKFGGVCEFANGLLVYSNEFNLGQIHVTRLQTDAEQVVGKGVLVKAHANPVKMVRLNRKGDMVATCSQDGTLIRVFQTDNGVLVREFRRGLDRTSIIDMRWSPDGSKLAVVSDKWTLHVFEVFNDAENKRHVLKDWINIKYFQSEWSICNFKLKVSKGSNDCKIAWISDTGLVIVWPNRRLADTFKLNYNDDEHVWWLQLNQRNEIPL</sequence>
<keyword id="KW-0002">3D-structure</keyword>
<keyword id="KW-0968">Cytoplasmic vesicle</keyword>
<keyword id="KW-0472">Membrane</keyword>
<keyword id="KW-0653">Protein transport</keyword>
<keyword id="KW-1185">Reference proteome</keyword>
<keyword id="KW-0677">Repeat</keyword>
<keyword id="KW-0813">Transport</keyword>
<keyword id="KW-0926">Vacuole</keyword>
<keyword id="KW-0853">WD repeat</keyword>
<reference key="1">
    <citation type="journal article" date="2004" name="Nature">
        <title>Genome evolution in yeasts.</title>
        <authorList>
            <person name="Dujon B."/>
            <person name="Sherman D."/>
            <person name="Fischer G."/>
            <person name="Durrens P."/>
            <person name="Casaregola S."/>
            <person name="Lafontaine I."/>
            <person name="de Montigny J."/>
            <person name="Marck C."/>
            <person name="Neuveglise C."/>
            <person name="Talla E."/>
            <person name="Goffard N."/>
            <person name="Frangeul L."/>
            <person name="Aigle M."/>
            <person name="Anthouard V."/>
            <person name="Babour A."/>
            <person name="Barbe V."/>
            <person name="Barnay S."/>
            <person name="Blanchin S."/>
            <person name="Beckerich J.-M."/>
            <person name="Beyne E."/>
            <person name="Bleykasten C."/>
            <person name="Boisrame A."/>
            <person name="Boyer J."/>
            <person name="Cattolico L."/>
            <person name="Confanioleri F."/>
            <person name="de Daruvar A."/>
            <person name="Despons L."/>
            <person name="Fabre E."/>
            <person name="Fairhead C."/>
            <person name="Ferry-Dumazet H."/>
            <person name="Groppi A."/>
            <person name="Hantraye F."/>
            <person name="Hennequin C."/>
            <person name="Jauniaux N."/>
            <person name="Joyet P."/>
            <person name="Kachouri R."/>
            <person name="Kerrest A."/>
            <person name="Koszul R."/>
            <person name="Lemaire M."/>
            <person name="Lesur I."/>
            <person name="Ma L."/>
            <person name="Muller H."/>
            <person name="Nicaud J.-M."/>
            <person name="Nikolski M."/>
            <person name="Oztas S."/>
            <person name="Ozier-Kalogeropoulos O."/>
            <person name="Pellenz S."/>
            <person name="Potier S."/>
            <person name="Richard G.-F."/>
            <person name="Straub M.-L."/>
            <person name="Suleau A."/>
            <person name="Swennen D."/>
            <person name="Tekaia F."/>
            <person name="Wesolowski-Louvel M."/>
            <person name="Westhof E."/>
            <person name="Wirth B."/>
            <person name="Zeniou-Meyer M."/>
            <person name="Zivanovic Y."/>
            <person name="Bolotin-Fukuhara M."/>
            <person name="Thierry A."/>
            <person name="Bouchier C."/>
            <person name="Caudron B."/>
            <person name="Scarpelli C."/>
            <person name="Gaillardin C."/>
            <person name="Weissenbach J."/>
            <person name="Wincker P."/>
            <person name="Souciet J.-L."/>
        </authorList>
    </citation>
    <scope>NUCLEOTIDE SEQUENCE [LARGE SCALE GENOMIC DNA]</scope>
    <source>
        <strain>ATCC 8585 / CBS 2359 / DSM 70799 / NBRC 1267 / NRRL Y-1140 / WM37</strain>
    </source>
</reference>
<organism>
    <name type="scientific">Kluyveromyces lactis (strain ATCC 8585 / CBS 2359 / DSM 70799 / NBRC 1267 / NRRL Y-1140 / WM37)</name>
    <name type="common">Yeast</name>
    <name type="synonym">Candida sphaerica</name>
    <dbReference type="NCBI Taxonomy" id="284590"/>
    <lineage>
        <taxon>Eukaryota</taxon>
        <taxon>Fungi</taxon>
        <taxon>Dikarya</taxon>
        <taxon>Ascomycota</taxon>
        <taxon>Saccharomycotina</taxon>
        <taxon>Saccharomycetes</taxon>
        <taxon>Saccharomycetales</taxon>
        <taxon>Saccharomycetaceae</taxon>
        <taxon>Kluyveromyces</taxon>
    </lineage>
</organism>
<gene>
    <name type="primary">HSV2</name>
    <name type="ordered locus">KLLA0E15972g</name>
</gene>